<gene>
    <name evidence="1" type="primary">secY2</name>
    <name type="ordered locus">SA2446</name>
</gene>
<organism>
    <name type="scientific">Staphylococcus aureus (strain N315)</name>
    <dbReference type="NCBI Taxonomy" id="158879"/>
    <lineage>
        <taxon>Bacteria</taxon>
        <taxon>Bacillati</taxon>
        <taxon>Bacillota</taxon>
        <taxon>Bacilli</taxon>
        <taxon>Bacillales</taxon>
        <taxon>Staphylococcaceae</taxon>
        <taxon>Staphylococcus</taxon>
    </lineage>
</organism>
<sequence length="403" mass="46901">MLKLLQQYEYKIIYKRMLYTCFILFIYILGTNISIVSYNDMQVKHESFFKIAISNMGGDVNTLNIFTLGLVPWLTSMIILMLISYRNMDKYMKQTSLEKHYKERILTLILSVIQSYFVIHEYVSKERVHQDNIYLTILILVTGTMLLVWLADKNSRYGIAGPMPIVMVSIIKSMMHQKMEYIDASHIVIALLIILVIITLFILLFIELVEVRIPYIDLMNVSATNMKSYLSWKVNPAGSITLMMSISAFVFLKSGIHFILSMFNKSISDDMPMLTFDSPVGISVYLVIQMLLGYFLSRFLINTKQKSKDFLKSGNYFSGVKPGKDTERYLNYQARRVCWFGSALVTVIIGIPLYFTLFVPHLSTEIYFSVQLIVLVYISINIAETIRTYLYFDKYKPFLNQYW</sequence>
<name>SECY2_STAAN</name>
<dbReference type="EMBL" id="BA000018">
    <property type="protein sequence ID" value="BAB43751.1"/>
    <property type="molecule type" value="Genomic_DNA"/>
</dbReference>
<dbReference type="RefSeq" id="WP_000916127.1">
    <property type="nucleotide sequence ID" value="NC_002745.2"/>
</dbReference>
<dbReference type="SMR" id="Q7A363"/>
<dbReference type="EnsemblBacteria" id="BAB43751">
    <property type="protein sequence ID" value="BAB43751"/>
    <property type="gene ID" value="BAB43751"/>
</dbReference>
<dbReference type="KEGG" id="sau:SA2446"/>
<dbReference type="HOGENOM" id="CLU_030313_4_0_9"/>
<dbReference type="GO" id="GO:0005886">
    <property type="term" value="C:plasma membrane"/>
    <property type="evidence" value="ECO:0007669"/>
    <property type="project" value="UniProtKB-SubCell"/>
</dbReference>
<dbReference type="GO" id="GO:0065002">
    <property type="term" value="P:intracellular protein transmembrane transport"/>
    <property type="evidence" value="ECO:0007669"/>
    <property type="project" value="UniProtKB-UniRule"/>
</dbReference>
<dbReference type="GO" id="GO:0006605">
    <property type="term" value="P:protein targeting"/>
    <property type="evidence" value="ECO:0007669"/>
    <property type="project" value="UniProtKB-UniRule"/>
</dbReference>
<dbReference type="FunFam" id="1.10.3370.10:FF:000015">
    <property type="entry name" value="Accessory Sec system protein translocase subunit SecY2"/>
    <property type="match status" value="1"/>
</dbReference>
<dbReference type="Gene3D" id="1.10.3370.10">
    <property type="entry name" value="SecY subunit domain"/>
    <property type="match status" value="1"/>
</dbReference>
<dbReference type="HAMAP" id="MF_01466">
    <property type="entry name" value="SecY2"/>
    <property type="match status" value="1"/>
</dbReference>
<dbReference type="InterPro" id="IPR002208">
    <property type="entry name" value="SecY/SEC61-alpha"/>
</dbReference>
<dbReference type="InterPro" id="IPR014269">
    <property type="entry name" value="SecY2"/>
</dbReference>
<dbReference type="InterPro" id="IPR023201">
    <property type="entry name" value="SecY_dom_sf"/>
</dbReference>
<dbReference type="NCBIfam" id="TIGR02920">
    <property type="entry name" value="acc_sec_Y2"/>
    <property type="match status" value="1"/>
</dbReference>
<dbReference type="NCBIfam" id="NF009082">
    <property type="entry name" value="PRK12417.1"/>
    <property type="match status" value="1"/>
</dbReference>
<dbReference type="Pfam" id="PF00344">
    <property type="entry name" value="SecY"/>
    <property type="match status" value="1"/>
</dbReference>
<dbReference type="PIRSF" id="PIRSF004557">
    <property type="entry name" value="SecY"/>
    <property type="match status" value="1"/>
</dbReference>
<dbReference type="PRINTS" id="PR00303">
    <property type="entry name" value="SECYTRNLCASE"/>
</dbReference>
<dbReference type="SUPFAM" id="SSF103491">
    <property type="entry name" value="Preprotein translocase SecY subunit"/>
    <property type="match status" value="1"/>
</dbReference>
<proteinExistence type="inferred from homology"/>
<protein>
    <recommendedName>
        <fullName evidence="1">Accessory Sec system protein translocase subunit SecY2</fullName>
    </recommendedName>
</protein>
<evidence type="ECO:0000255" key="1">
    <source>
        <dbReference type="HAMAP-Rule" id="MF_01466"/>
    </source>
</evidence>
<keyword id="KW-1003">Cell membrane</keyword>
<keyword id="KW-0472">Membrane</keyword>
<keyword id="KW-0653">Protein transport</keyword>
<keyword id="KW-0811">Translocation</keyword>
<keyword id="KW-0812">Transmembrane</keyword>
<keyword id="KW-1133">Transmembrane helix</keyword>
<keyword id="KW-0813">Transport</keyword>
<comment type="function">
    <text evidence="1">Part of the accessory SecA2/SecY2 system specifically required for export of possible cell wall proteins. The central subunit of a protein translocation channel.</text>
</comment>
<comment type="subunit">
    <text evidence="1">Component of the accessory SecA2/SecY2 protein translocase complex required to export cell wall proteins. May form heterotrimers with SecE and SecG subunits.</text>
</comment>
<comment type="subcellular location">
    <subcellularLocation>
        <location evidence="1">Cell membrane</location>
        <topology evidence="1">Multi-pass membrane protein</topology>
    </subcellularLocation>
</comment>
<comment type="similarity">
    <text evidence="1">Belongs to the SecY/SEC61-alpha family. SecY2 subfamily.</text>
</comment>
<feature type="chain" id="PRO_0000414867" description="Accessory Sec system protein translocase subunit SecY2">
    <location>
        <begin position="1"/>
        <end position="403"/>
    </location>
</feature>
<feature type="transmembrane region" description="Helical" evidence="1">
    <location>
        <begin position="17"/>
        <end position="37"/>
    </location>
</feature>
<feature type="transmembrane region" description="Helical" evidence="1">
    <location>
        <begin position="63"/>
        <end position="83"/>
    </location>
</feature>
<feature type="transmembrane region" description="Helical" evidence="1">
    <location>
        <begin position="105"/>
        <end position="125"/>
    </location>
</feature>
<feature type="transmembrane region" description="Helical" evidence="1">
    <location>
        <begin position="131"/>
        <end position="151"/>
    </location>
</feature>
<feature type="transmembrane region" description="Helical" evidence="1">
    <location>
        <begin position="157"/>
        <end position="177"/>
    </location>
</feature>
<feature type="transmembrane region" description="Helical" evidence="1">
    <location>
        <begin position="186"/>
        <end position="206"/>
    </location>
</feature>
<feature type="transmembrane region" description="Helical" evidence="1">
    <location>
        <begin position="240"/>
        <end position="260"/>
    </location>
</feature>
<feature type="transmembrane region" description="Helical" evidence="1">
    <location>
        <begin position="276"/>
        <end position="296"/>
    </location>
</feature>
<feature type="transmembrane region" description="Helical" evidence="1">
    <location>
        <begin position="339"/>
        <end position="359"/>
    </location>
</feature>
<feature type="transmembrane region" description="Helical" evidence="1">
    <location>
        <begin position="366"/>
        <end position="386"/>
    </location>
</feature>
<reference key="1">
    <citation type="journal article" date="2001" name="Lancet">
        <title>Whole genome sequencing of meticillin-resistant Staphylococcus aureus.</title>
        <authorList>
            <person name="Kuroda M."/>
            <person name="Ohta T."/>
            <person name="Uchiyama I."/>
            <person name="Baba T."/>
            <person name="Yuzawa H."/>
            <person name="Kobayashi I."/>
            <person name="Cui L."/>
            <person name="Oguchi A."/>
            <person name="Aoki K."/>
            <person name="Nagai Y."/>
            <person name="Lian J.-Q."/>
            <person name="Ito T."/>
            <person name="Kanamori M."/>
            <person name="Matsumaru H."/>
            <person name="Maruyama A."/>
            <person name="Murakami H."/>
            <person name="Hosoyama A."/>
            <person name="Mizutani-Ui Y."/>
            <person name="Takahashi N.K."/>
            <person name="Sawano T."/>
            <person name="Inoue R."/>
            <person name="Kaito C."/>
            <person name="Sekimizu K."/>
            <person name="Hirakawa H."/>
            <person name="Kuhara S."/>
            <person name="Goto S."/>
            <person name="Yabuzaki J."/>
            <person name="Kanehisa M."/>
            <person name="Yamashita A."/>
            <person name="Oshima K."/>
            <person name="Furuya K."/>
            <person name="Yoshino C."/>
            <person name="Shiba T."/>
            <person name="Hattori M."/>
            <person name="Ogasawara N."/>
            <person name="Hayashi H."/>
            <person name="Hiramatsu K."/>
        </authorList>
    </citation>
    <scope>NUCLEOTIDE SEQUENCE [LARGE SCALE GENOMIC DNA]</scope>
    <source>
        <strain>N315</strain>
    </source>
</reference>
<accession>Q7A363</accession>